<keyword id="KW-0963">Cytoplasm</keyword>
<keyword id="KW-0671">Queuosine biosynthesis</keyword>
<keyword id="KW-1185">Reference proteome</keyword>
<keyword id="KW-0949">S-adenosyl-L-methionine</keyword>
<keyword id="KW-0808">Transferase</keyword>
<sequence length="353" mass="39706">MHVADFSFNLPKNLIARYPLPERSTCRLLSLDGHSGAIKHNVFTDILDQLSLGDLLVFNNTRVIPARLFGRKISGGKVEVLVERVLDNQRVLAHIRASKTPKIDTLLLLGDNENIRAIIVARHQIWFELLFDDQRDILTILNDAGHIPLPYYLDRPDYSLDRELYQTVYSQHPGAIAAPTAGLHFDQQLLSALRVKGVEMVFITLHVGTGTFQPIKVKKIEHHHMYSEYTEVPHTVVDAVIACKSRGNRVVAVGTTSVRSLESAIVSVSNSKHTMLAPFCGETSIFIYPGYRFRVIDALITNFHLPQSTPIMLVSAFAGYQHTFNAYREAVNLAYRFLSYGDAMFITNNNSVF</sequence>
<comment type="function">
    <text evidence="1">Transfers and isomerizes the ribose moiety from AdoMet to the 7-aminomethyl group of 7-deazaguanine (preQ1-tRNA) to give epoxyqueuosine (oQ-tRNA).</text>
</comment>
<comment type="catalytic activity">
    <reaction evidence="1">
        <text>7-aminomethyl-7-carbaguanosine(34) in tRNA + S-adenosyl-L-methionine = epoxyqueuosine(34) in tRNA + adenine + L-methionine + 2 H(+)</text>
        <dbReference type="Rhea" id="RHEA:32155"/>
        <dbReference type="Rhea" id="RHEA-COMP:10342"/>
        <dbReference type="Rhea" id="RHEA-COMP:18582"/>
        <dbReference type="ChEBI" id="CHEBI:15378"/>
        <dbReference type="ChEBI" id="CHEBI:16708"/>
        <dbReference type="ChEBI" id="CHEBI:57844"/>
        <dbReference type="ChEBI" id="CHEBI:59789"/>
        <dbReference type="ChEBI" id="CHEBI:82833"/>
        <dbReference type="ChEBI" id="CHEBI:194443"/>
        <dbReference type="EC" id="2.4.99.17"/>
    </reaction>
</comment>
<comment type="pathway">
    <text evidence="1">tRNA modification; tRNA-queuosine biosynthesis.</text>
</comment>
<comment type="subunit">
    <text evidence="1">Monomer.</text>
</comment>
<comment type="subcellular location">
    <subcellularLocation>
        <location evidence="1">Cytoplasm</location>
    </subcellularLocation>
</comment>
<comment type="similarity">
    <text evidence="1">Belongs to the QueA family.</text>
</comment>
<accession>Q1LSP1</accession>
<gene>
    <name evidence="1" type="primary">queA</name>
    <name type="ordered locus">BCI_0596</name>
</gene>
<dbReference type="EC" id="2.4.99.17" evidence="1"/>
<dbReference type="EMBL" id="CP000238">
    <property type="protein sequence ID" value="ABF13923.1"/>
    <property type="molecule type" value="Genomic_DNA"/>
</dbReference>
<dbReference type="RefSeq" id="WP_011520756.1">
    <property type="nucleotide sequence ID" value="NC_007984.1"/>
</dbReference>
<dbReference type="SMR" id="Q1LSP1"/>
<dbReference type="STRING" id="374463.BCI_0596"/>
<dbReference type="KEGG" id="bci:BCI_0596"/>
<dbReference type="HOGENOM" id="CLU_039110_1_0_6"/>
<dbReference type="OrthoDB" id="9805933at2"/>
<dbReference type="UniPathway" id="UPA00392"/>
<dbReference type="Proteomes" id="UP000002427">
    <property type="component" value="Chromosome"/>
</dbReference>
<dbReference type="GO" id="GO:0005737">
    <property type="term" value="C:cytoplasm"/>
    <property type="evidence" value="ECO:0007669"/>
    <property type="project" value="UniProtKB-SubCell"/>
</dbReference>
<dbReference type="GO" id="GO:0051075">
    <property type="term" value="F:S-adenosylmethionine:tRNA ribosyltransferase-isomerase activity"/>
    <property type="evidence" value="ECO:0007669"/>
    <property type="project" value="UniProtKB-EC"/>
</dbReference>
<dbReference type="GO" id="GO:0008616">
    <property type="term" value="P:queuosine biosynthetic process"/>
    <property type="evidence" value="ECO:0007669"/>
    <property type="project" value="UniProtKB-UniRule"/>
</dbReference>
<dbReference type="GO" id="GO:0002099">
    <property type="term" value="P:tRNA wobble guanine modification"/>
    <property type="evidence" value="ECO:0007669"/>
    <property type="project" value="TreeGrafter"/>
</dbReference>
<dbReference type="FunFam" id="2.40.10.240:FF:000001">
    <property type="entry name" value="S-adenosylmethionine:tRNA ribosyltransferase-isomerase"/>
    <property type="match status" value="1"/>
</dbReference>
<dbReference type="FunFam" id="3.40.1780.10:FF:000001">
    <property type="entry name" value="S-adenosylmethionine:tRNA ribosyltransferase-isomerase"/>
    <property type="match status" value="1"/>
</dbReference>
<dbReference type="Gene3D" id="2.40.10.240">
    <property type="entry name" value="QueA-like"/>
    <property type="match status" value="1"/>
</dbReference>
<dbReference type="Gene3D" id="3.40.1780.10">
    <property type="entry name" value="QueA-like"/>
    <property type="match status" value="1"/>
</dbReference>
<dbReference type="HAMAP" id="MF_00113">
    <property type="entry name" value="QueA"/>
    <property type="match status" value="1"/>
</dbReference>
<dbReference type="InterPro" id="IPR003699">
    <property type="entry name" value="QueA"/>
</dbReference>
<dbReference type="InterPro" id="IPR042118">
    <property type="entry name" value="QueA_dom1"/>
</dbReference>
<dbReference type="InterPro" id="IPR042119">
    <property type="entry name" value="QueA_dom2"/>
</dbReference>
<dbReference type="InterPro" id="IPR036100">
    <property type="entry name" value="QueA_sf"/>
</dbReference>
<dbReference type="NCBIfam" id="NF001140">
    <property type="entry name" value="PRK00147.1"/>
    <property type="match status" value="1"/>
</dbReference>
<dbReference type="NCBIfam" id="TIGR00113">
    <property type="entry name" value="queA"/>
    <property type="match status" value="1"/>
</dbReference>
<dbReference type="PANTHER" id="PTHR30307">
    <property type="entry name" value="S-ADENOSYLMETHIONINE:TRNA RIBOSYLTRANSFERASE-ISOMERASE"/>
    <property type="match status" value="1"/>
</dbReference>
<dbReference type="PANTHER" id="PTHR30307:SF0">
    <property type="entry name" value="S-ADENOSYLMETHIONINE:TRNA RIBOSYLTRANSFERASE-ISOMERASE"/>
    <property type="match status" value="1"/>
</dbReference>
<dbReference type="Pfam" id="PF02547">
    <property type="entry name" value="Queuosine_synth"/>
    <property type="match status" value="1"/>
</dbReference>
<dbReference type="SUPFAM" id="SSF111337">
    <property type="entry name" value="QueA-like"/>
    <property type="match status" value="1"/>
</dbReference>
<evidence type="ECO:0000255" key="1">
    <source>
        <dbReference type="HAMAP-Rule" id="MF_00113"/>
    </source>
</evidence>
<feature type="chain" id="PRO_1000015180" description="S-adenosylmethionine:tRNA ribosyltransferase-isomerase">
    <location>
        <begin position="1"/>
        <end position="353"/>
    </location>
</feature>
<protein>
    <recommendedName>
        <fullName evidence="1">S-adenosylmethionine:tRNA ribosyltransferase-isomerase</fullName>
        <ecNumber evidence="1">2.4.99.17</ecNumber>
    </recommendedName>
    <alternativeName>
        <fullName evidence="1">Queuosine biosynthesis protein QueA</fullName>
    </alternativeName>
</protein>
<name>QUEA_BAUCH</name>
<organism>
    <name type="scientific">Baumannia cicadellinicola subsp. Homalodisca coagulata</name>
    <dbReference type="NCBI Taxonomy" id="374463"/>
    <lineage>
        <taxon>Bacteria</taxon>
        <taxon>Pseudomonadati</taxon>
        <taxon>Pseudomonadota</taxon>
        <taxon>Gammaproteobacteria</taxon>
        <taxon>Candidatus Palibaumannia</taxon>
    </lineage>
</organism>
<proteinExistence type="inferred from homology"/>
<reference key="1">
    <citation type="journal article" date="2006" name="PLoS Biol.">
        <title>Metabolic complementarity and genomics of the dual bacterial symbiosis of sharpshooters.</title>
        <authorList>
            <person name="Wu D."/>
            <person name="Daugherty S.C."/>
            <person name="Van Aken S.E."/>
            <person name="Pai G.H."/>
            <person name="Watkins K.L."/>
            <person name="Khouri H."/>
            <person name="Tallon L.J."/>
            <person name="Zaborsky J.M."/>
            <person name="Dunbar H.E."/>
            <person name="Tran P.L."/>
            <person name="Moran N.A."/>
            <person name="Eisen J.A."/>
        </authorList>
    </citation>
    <scope>NUCLEOTIDE SEQUENCE [LARGE SCALE GENOMIC DNA]</scope>
</reference>